<name>MNME_SALG2</name>
<reference key="1">
    <citation type="journal article" date="2008" name="Genome Res.">
        <title>Comparative genome analysis of Salmonella enteritidis PT4 and Salmonella gallinarum 287/91 provides insights into evolutionary and host adaptation pathways.</title>
        <authorList>
            <person name="Thomson N.R."/>
            <person name="Clayton D.J."/>
            <person name="Windhorst D."/>
            <person name="Vernikos G."/>
            <person name="Davidson S."/>
            <person name="Churcher C."/>
            <person name="Quail M.A."/>
            <person name="Stevens M."/>
            <person name="Jones M.A."/>
            <person name="Watson M."/>
            <person name="Barron A."/>
            <person name="Layton A."/>
            <person name="Pickard D."/>
            <person name="Kingsley R.A."/>
            <person name="Bignell A."/>
            <person name="Clark L."/>
            <person name="Harris B."/>
            <person name="Ormond D."/>
            <person name="Abdellah Z."/>
            <person name="Brooks K."/>
            <person name="Cherevach I."/>
            <person name="Chillingworth T."/>
            <person name="Woodward J."/>
            <person name="Norberczak H."/>
            <person name="Lord A."/>
            <person name="Arrowsmith C."/>
            <person name="Jagels K."/>
            <person name="Moule S."/>
            <person name="Mungall K."/>
            <person name="Saunders M."/>
            <person name="Whitehead S."/>
            <person name="Chabalgoity J.A."/>
            <person name="Maskell D."/>
            <person name="Humphreys T."/>
            <person name="Roberts M."/>
            <person name="Barrow P.A."/>
            <person name="Dougan G."/>
            <person name="Parkhill J."/>
        </authorList>
    </citation>
    <scope>NUCLEOTIDE SEQUENCE [LARGE SCALE GENOMIC DNA]</scope>
    <source>
        <strain>287/91 / NCTC 13346</strain>
    </source>
</reference>
<gene>
    <name evidence="1" type="primary">mnmE</name>
    <name evidence="1" type="synonym">trmE</name>
    <name type="ordered locus">SG3588</name>
</gene>
<accession>B5RFY2</accession>
<organism>
    <name type="scientific">Salmonella gallinarum (strain 287/91 / NCTC 13346)</name>
    <dbReference type="NCBI Taxonomy" id="550538"/>
    <lineage>
        <taxon>Bacteria</taxon>
        <taxon>Pseudomonadati</taxon>
        <taxon>Pseudomonadota</taxon>
        <taxon>Gammaproteobacteria</taxon>
        <taxon>Enterobacterales</taxon>
        <taxon>Enterobacteriaceae</taxon>
        <taxon>Salmonella</taxon>
    </lineage>
</organism>
<evidence type="ECO:0000255" key="1">
    <source>
        <dbReference type="HAMAP-Rule" id="MF_00379"/>
    </source>
</evidence>
<protein>
    <recommendedName>
        <fullName evidence="1">tRNA modification GTPase MnmE</fullName>
        <ecNumber evidence="1">3.6.-.-</ecNumber>
    </recommendedName>
</protein>
<proteinExistence type="inferred from homology"/>
<keyword id="KW-0963">Cytoplasm</keyword>
<keyword id="KW-0342">GTP-binding</keyword>
<keyword id="KW-0378">Hydrolase</keyword>
<keyword id="KW-0460">Magnesium</keyword>
<keyword id="KW-0479">Metal-binding</keyword>
<keyword id="KW-0547">Nucleotide-binding</keyword>
<keyword id="KW-0630">Potassium</keyword>
<keyword id="KW-0819">tRNA processing</keyword>
<sequence length="454" mass="49066">MSHNDTIVAQATPPGRGGVGILRISGLKARDVAQEVLGKLPKPRHADYLPFKDVDGSALDQGIALWFPGPNSFTGEDVLELQGHGGPVILDLLLKRILTLPGVRIARPGEFSERAFLNDKLDLAQAEAIADLIDASSEQAARSALNSLQGAFSARVNHLVEALTHLRIYVEAAIDFPDEEIDFLSDGKIEAQLNGVIADLDAVRTEARQGSLLREGMKVVIAGRPNAGKSSLLNALAGREAAIVTDIAGTTRDVLREHIHIDGMPLHIIDTAGLRDASDEVERIGIERAWQEIEQADRVLFMVDGTTTDAVDPADIWPDFIARLPKNLPITVVRNKADITGETLGISEVNGHSLVRLSARTGEGVDVLRNHLKQSMGFDTNMEGGFLARRRHLQALAEAAEHLEQGKAQLLGAWAGELLAEELRLAQQSLSEITGEFTSDDLLGRIFSSFCIGK</sequence>
<feature type="chain" id="PRO_1000197060" description="tRNA modification GTPase MnmE">
    <location>
        <begin position="1"/>
        <end position="454"/>
    </location>
</feature>
<feature type="domain" description="TrmE-type G">
    <location>
        <begin position="216"/>
        <end position="377"/>
    </location>
</feature>
<feature type="binding site" evidence="1">
    <location>
        <position position="23"/>
    </location>
    <ligand>
        <name>(6S)-5-formyl-5,6,7,8-tetrahydrofolate</name>
        <dbReference type="ChEBI" id="CHEBI:57457"/>
    </ligand>
</feature>
<feature type="binding site" evidence="1">
    <location>
        <position position="80"/>
    </location>
    <ligand>
        <name>(6S)-5-formyl-5,6,7,8-tetrahydrofolate</name>
        <dbReference type="ChEBI" id="CHEBI:57457"/>
    </ligand>
</feature>
<feature type="binding site" evidence="1">
    <location>
        <position position="120"/>
    </location>
    <ligand>
        <name>(6S)-5-formyl-5,6,7,8-tetrahydrofolate</name>
        <dbReference type="ChEBI" id="CHEBI:57457"/>
    </ligand>
</feature>
<feature type="binding site" evidence="1">
    <location>
        <begin position="226"/>
        <end position="231"/>
    </location>
    <ligand>
        <name>GTP</name>
        <dbReference type="ChEBI" id="CHEBI:37565"/>
    </ligand>
</feature>
<feature type="binding site" evidence="1">
    <location>
        <position position="226"/>
    </location>
    <ligand>
        <name>K(+)</name>
        <dbReference type="ChEBI" id="CHEBI:29103"/>
    </ligand>
</feature>
<feature type="binding site" evidence="1">
    <location>
        <position position="230"/>
    </location>
    <ligand>
        <name>Mg(2+)</name>
        <dbReference type="ChEBI" id="CHEBI:18420"/>
    </ligand>
</feature>
<feature type="binding site" evidence="1">
    <location>
        <begin position="245"/>
        <end position="251"/>
    </location>
    <ligand>
        <name>GTP</name>
        <dbReference type="ChEBI" id="CHEBI:37565"/>
    </ligand>
</feature>
<feature type="binding site" evidence="1">
    <location>
        <position position="245"/>
    </location>
    <ligand>
        <name>K(+)</name>
        <dbReference type="ChEBI" id="CHEBI:29103"/>
    </ligand>
</feature>
<feature type="binding site" evidence="1">
    <location>
        <position position="247"/>
    </location>
    <ligand>
        <name>K(+)</name>
        <dbReference type="ChEBI" id="CHEBI:29103"/>
    </ligand>
</feature>
<feature type="binding site" evidence="1">
    <location>
        <position position="250"/>
    </location>
    <ligand>
        <name>K(+)</name>
        <dbReference type="ChEBI" id="CHEBI:29103"/>
    </ligand>
</feature>
<feature type="binding site" evidence="1">
    <location>
        <position position="251"/>
    </location>
    <ligand>
        <name>Mg(2+)</name>
        <dbReference type="ChEBI" id="CHEBI:18420"/>
    </ligand>
</feature>
<feature type="binding site" evidence="1">
    <location>
        <begin position="270"/>
        <end position="273"/>
    </location>
    <ligand>
        <name>GTP</name>
        <dbReference type="ChEBI" id="CHEBI:37565"/>
    </ligand>
</feature>
<feature type="binding site" evidence="1">
    <location>
        <begin position="335"/>
        <end position="338"/>
    </location>
    <ligand>
        <name>GTP</name>
        <dbReference type="ChEBI" id="CHEBI:37565"/>
    </ligand>
</feature>
<feature type="binding site" evidence="1">
    <location>
        <begin position="358"/>
        <end position="360"/>
    </location>
    <ligand>
        <name>GTP</name>
        <dbReference type="ChEBI" id="CHEBI:37565"/>
    </ligand>
</feature>
<feature type="binding site" evidence="1">
    <location>
        <position position="454"/>
    </location>
    <ligand>
        <name>(6S)-5-formyl-5,6,7,8-tetrahydrofolate</name>
        <dbReference type="ChEBI" id="CHEBI:57457"/>
    </ligand>
</feature>
<comment type="function">
    <text evidence="1">Exhibits a very high intrinsic GTPase hydrolysis rate. Involved in the addition of a carboxymethylaminomethyl (cmnm) group at the wobble position (U34) of certain tRNAs, forming tRNA-cmnm(5)s(2)U34.</text>
</comment>
<comment type="cofactor">
    <cofactor evidence="1">
        <name>K(+)</name>
        <dbReference type="ChEBI" id="CHEBI:29103"/>
    </cofactor>
    <text evidence="1">Binds 1 potassium ion per subunit.</text>
</comment>
<comment type="subunit">
    <text evidence="1">Homodimer. Heterotetramer of two MnmE and two MnmG subunits.</text>
</comment>
<comment type="subcellular location">
    <subcellularLocation>
        <location evidence="1">Cytoplasm</location>
    </subcellularLocation>
</comment>
<comment type="similarity">
    <text evidence="1">Belongs to the TRAFAC class TrmE-Era-EngA-EngB-Septin-like GTPase superfamily. TrmE GTPase family.</text>
</comment>
<dbReference type="EC" id="3.6.-.-" evidence="1"/>
<dbReference type="EMBL" id="AM933173">
    <property type="protein sequence ID" value="CAR39376.1"/>
    <property type="molecule type" value="Genomic_DNA"/>
</dbReference>
<dbReference type="RefSeq" id="WP_000019069.1">
    <property type="nucleotide sequence ID" value="NC_011274.1"/>
</dbReference>
<dbReference type="SMR" id="B5RFY2"/>
<dbReference type="KEGG" id="seg:SG3588"/>
<dbReference type="HOGENOM" id="CLU_019624_4_1_6"/>
<dbReference type="Proteomes" id="UP000008321">
    <property type="component" value="Chromosome"/>
</dbReference>
<dbReference type="GO" id="GO:0005829">
    <property type="term" value="C:cytosol"/>
    <property type="evidence" value="ECO:0007669"/>
    <property type="project" value="TreeGrafter"/>
</dbReference>
<dbReference type="GO" id="GO:0005525">
    <property type="term" value="F:GTP binding"/>
    <property type="evidence" value="ECO:0007669"/>
    <property type="project" value="UniProtKB-UniRule"/>
</dbReference>
<dbReference type="GO" id="GO:0003924">
    <property type="term" value="F:GTPase activity"/>
    <property type="evidence" value="ECO:0007669"/>
    <property type="project" value="UniProtKB-UniRule"/>
</dbReference>
<dbReference type="GO" id="GO:0046872">
    <property type="term" value="F:metal ion binding"/>
    <property type="evidence" value="ECO:0007669"/>
    <property type="project" value="UniProtKB-KW"/>
</dbReference>
<dbReference type="GO" id="GO:0030488">
    <property type="term" value="P:tRNA methylation"/>
    <property type="evidence" value="ECO:0007669"/>
    <property type="project" value="TreeGrafter"/>
</dbReference>
<dbReference type="GO" id="GO:0002098">
    <property type="term" value="P:tRNA wobble uridine modification"/>
    <property type="evidence" value="ECO:0007669"/>
    <property type="project" value="TreeGrafter"/>
</dbReference>
<dbReference type="CDD" id="cd04164">
    <property type="entry name" value="trmE"/>
    <property type="match status" value="1"/>
</dbReference>
<dbReference type="CDD" id="cd14858">
    <property type="entry name" value="TrmE_N"/>
    <property type="match status" value="1"/>
</dbReference>
<dbReference type="FunFam" id="3.30.1360.120:FF:000001">
    <property type="entry name" value="tRNA modification GTPase MnmE"/>
    <property type="match status" value="1"/>
</dbReference>
<dbReference type="FunFam" id="3.40.50.300:FF:000249">
    <property type="entry name" value="tRNA modification GTPase MnmE"/>
    <property type="match status" value="1"/>
</dbReference>
<dbReference type="Gene3D" id="3.40.50.300">
    <property type="entry name" value="P-loop containing nucleotide triphosphate hydrolases"/>
    <property type="match status" value="1"/>
</dbReference>
<dbReference type="Gene3D" id="3.30.1360.120">
    <property type="entry name" value="Probable tRNA modification gtpase trme, domain 1"/>
    <property type="match status" value="1"/>
</dbReference>
<dbReference type="Gene3D" id="1.20.120.430">
    <property type="entry name" value="tRNA modification GTPase MnmE domain 2"/>
    <property type="match status" value="1"/>
</dbReference>
<dbReference type="HAMAP" id="MF_00379">
    <property type="entry name" value="GTPase_MnmE"/>
    <property type="match status" value="1"/>
</dbReference>
<dbReference type="InterPro" id="IPR031168">
    <property type="entry name" value="G_TrmE"/>
</dbReference>
<dbReference type="InterPro" id="IPR006073">
    <property type="entry name" value="GTP-bd"/>
</dbReference>
<dbReference type="InterPro" id="IPR018948">
    <property type="entry name" value="GTP-bd_TrmE_N"/>
</dbReference>
<dbReference type="InterPro" id="IPR004520">
    <property type="entry name" value="GTPase_MnmE"/>
</dbReference>
<dbReference type="InterPro" id="IPR027368">
    <property type="entry name" value="MnmE_dom2"/>
</dbReference>
<dbReference type="InterPro" id="IPR025867">
    <property type="entry name" value="MnmE_helical"/>
</dbReference>
<dbReference type="InterPro" id="IPR027417">
    <property type="entry name" value="P-loop_NTPase"/>
</dbReference>
<dbReference type="InterPro" id="IPR005225">
    <property type="entry name" value="Small_GTP-bd"/>
</dbReference>
<dbReference type="InterPro" id="IPR027266">
    <property type="entry name" value="TrmE/GcvT_dom1"/>
</dbReference>
<dbReference type="NCBIfam" id="TIGR00450">
    <property type="entry name" value="mnmE_trmE_thdF"/>
    <property type="match status" value="1"/>
</dbReference>
<dbReference type="NCBIfam" id="NF003661">
    <property type="entry name" value="PRK05291.1-3"/>
    <property type="match status" value="1"/>
</dbReference>
<dbReference type="NCBIfam" id="TIGR00231">
    <property type="entry name" value="small_GTP"/>
    <property type="match status" value="1"/>
</dbReference>
<dbReference type="PANTHER" id="PTHR42714">
    <property type="entry name" value="TRNA MODIFICATION GTPASE GTPBP3"/>
    <property type="match status" value="1"/>
</dbReference>
<dbReference type="PANTHER" id="PTHR42714:SF2">
    <property type="entry name" value="TRNA MODIFICATION GTPASE GTPBP3, MITOCHONDRIAL"/>
    <property type="match status" value="1"/>
</dbReference>
<dbReference type="Pfam" id="PF01926">
    <property type="entry name" value="MMR_HSR1"/>
    <property type="match status" value="1"/>
</dbReference>
<dbReference type="Pfam" id="PF12631">
    <property type="entry name" value="MnmE_helical"/>
    <property type="match status" value="1"/>
</dbReference>
<dbReference type="Pfam" id="PF10396">
    <property type="entry name" value="TrmE_N"/>
    <property type="match status" value="1"/>
</dbReference>
<dbReference type="SUPFAM" id="SSF52540">
    <property type="entry name" value="P-loop containing nucleoside triphosphate hydrolases"/>
    <property type="match status" value="1"/>
</dbReference>
<dbReference type="SUPFAM" id="SSF116878">
    <property type="entry name" value="TrmE connector domain"/>
    <property type="match status" value="1"/>
</dbReference>
<dbReference type="PROSITE" id="PS51709">
    <property type="entry name" value="G_TRME"/>
    <property type="match status" value="1"/>
</dbReference>